<name>RS9_AZOVD</name>
<reference key="1">
    <citation type="journal article" date="2009" name="J. Bacteriol.">
        <title>Genome sequence of Azotobacter vinelandii, an obligate aerobe specialized to support diverse anaerobic metabolic processes.</title>
        <authorList>
            <person name="Setubal J.C."/>
            <person name="Dos Santos P."/>
            <person name="Goldman B.S."/>
            <person name="Ertesvaag H."/>
            <person name="Espin G."/>
            <person name="Rubio L.M."/>
            <person name="Valla S."/>
            <person name="Almeida N.F."/>
            <person name="Balasubramanian D."/>
            <person name="Cromes L."/>
            <person name="Curatti L."/>
            <person name="Du Z."/>
            <person name="Godsy E."/>
            <person name="Goodner B."/>
            <person name="Hellner-Burris K."/>
            <person name="Hernandez J.A."/>
            <person name="Houmiel K."/>
            <person name="Imperial J."/>
            <person name="Kennedy C."/>
            <person name="Larson T.J."/>
            <person name="Latreille P."/>
            <person name="Ligon L.S."/>
            <person name="Lu J."/>
            <person name="Maerk M."/>
            <person name="Miller N.M."/>
            <person name="Norton S."/>
            <person name="O'Carroll I.P."/>
            <person name="Paulsen I."/>
            <person name="Raulfs E.C."/>
            <person name="Roemer R."/>
            <person name="Rosser J."/>
            <person name="Segura D."/>
            <person name="Slater S."/>
            <person name="Stricklin S.L."/>
            <person name="Studholme D.J."/>
            <person name="Sun J."/>
            <person name="Viana C.J."/>
            <person name="Wallin E."/>
            <person name="Wang B."/>
            <person name="Wheeler C."/>
            <person name="Zhu H."/>
            <person name="Dean D.R."/>
            <person name="Dixon R."/>
            <person name="Wood D."/>
        </authorList>
    </citation>
    <scope>NUCLEOTIDE SEQUENCE [LARGE SCALE GENOMIC DNA]</scope>
    <source>
        <strain>DJ / ATCC BAA-1303</strain>
    </source>
</reference>
<dbReference type="EMBL" id="CP001157">
    <property type="protein sequence ID" value="ACO77531.1"/>
    <property type="molecule type" value="Genomic_DNA"/>
</dbReference>
<dbReference type="RefSeq" id="WP_012699951.1">
    <property type="nucleotide sequence ID" value="NC_012560.1"/>
</dbReference>
<dbReference type="SMR" id="C1DQ79"/>
<dbReference type="STRING" id="322710.Avin_13050"/>
<dbReference type="EnsemblBacteria" id="ACO77531">
    <property type="protein sequence ID" value="ACO77531"/>
    <property type="gene ID" value="Avin_13050"/>
</dbReference>
<dbReference type="GeneID" id="88184621"/>
<dbReference type="KEGG" id="avn:Avin_13050"/>
<dbReference type="eggNOG" id="COG0103">
    <property type="taxonomic scope" value="Bacteria"/>
</dbReference>
<dbReference type="HOGENOM" id="CLU_046483_2_1_6"/>
<dbReference type="OrthoDB" id="9803965at2"/>
<dbReference type="Proteomes" id="UP000002424">
    <property type="component" value="Chromosome"/>
</dbReference>
<dbReference type="GO" id="GO:0022627">
    <property type="term" value="C:cytosolic small ribosomal subunit"/>
    <property type="evidence" value="ECO:0007669"/>
    <property type="project" value="TreeGrafter"/>
</dbReference>
<dbReference type="GO" id="GO:0003723">
    <property type="term" value="F:RNA binding"/>
    <property type="evidence" value="ECO:0007669"/>
    <property type="project" value="TreeGrafter"/>
</dbReference>
<dbReference type="GO" id="GO:0003735">
    <property type="term" value="F:structural constituent of ribosome"/>
    <property type="evidence" value="ECO:0007669"/>
    <property type="project" value="InterPro"/>
</dbReference>
<dbReference type="GO" id="GO:0006412">
    <property type="term" value="P:translation"/>
    <property type="evidence" value="ECO:0007669"/>
    <property type="project" value="UniProtKB-UniRule"/>
</dbReference>
<dbReference type="FunFam" id="3.30.230.10:FF:000001">
    <property type="entry name" value="30S ribosomal protein S9"/>
    <property type="match status" value="1"/>
</dbReference>
<dbReference type="Gene3D" id="3.30.230.10">
    <property type="match status" value="1"/>
</dbReference>
<dbReference type="HAMAP" id="MF_00532_B">
    <property type="entry name" value="Ribosomal_uS9_B"/>
    <property type="match status" value="1"/>
</dbReference>
<dbReference type="InterPro" id="IPR020568">
    <property type="entry name" value="Ribosomal_Su5_D2-typ_SF"/>
</dbReference>
<dbReference type="InterPro" id="IPR000754">
    <property type="entry name" value="Ribosomal_uS9"/>
</dbReference>
<dbReference type="InterPro" id="IPR023035">
    <property type="entry name" value="Ribosomal_uS9_bac/plastid"/>
</dbReference>
<dbReference type="InterPro" id="IPR020574">
    <property type="entry name" value="Ribosomal_uS9_CS"/>
</dbReference>
<dbReference type="InterPro" id="IPR014721">
    <property type="entry name" value="Ribsml_uS5_D2-typ_fold_subgr"/>
</dbReference>
<dbReference type="NCBIfam" id="NF001099">
    <property type="entry name" value="PRK00132.1"/>
    <property type="match status" value="1"/>
</dbReference>
<dbReference type="PANTHER" id="PTHR21569">
    <property type="entry name" value="RIBOSOMAL PROTEIN S9"/>
    <property type="match status" value="1"/>
</dbReference>
<dbReference type="PANTHER" id="PTHR21569:SF1">
    <property type="entry name" value="SMALL RIBOSOMAL SUBUNIT PROTEIN US9M"/>
    <property type="match status" value="1"/>
</dbReference>
<dbReference type="Pfam" id="PF00380">
    <property type="entry name" value="Ribosomal_S9"/>
    <property type="match status" value="1"/>
</dbReference>
<dbReference type="SUPFAM" id="SSF54211">
    <property type="entry name" value="Ribosomal protein S5 domain 2-like"/>
    <property type="match status" value="1"/>
</dbReference>
<dbReference type="PROSITE" id="PS00360">
    <property type="entry name" value="RIBOSOMAL_S9"/>
    <property type="match status" value="1"/>
</dbReference>
<evidence type="ECO:0000255" key="1">
    <source>
        <dbReference type="HAMAP-Rule" id="MF_00532"/>
    </source>
</evidence>
<evidence type="ECO:0000305" key="2"/>
<protein>
    <recommendedName>
        <fullName evidence="1">Small ribosomal subunit protein uS9</fullName>
    </recommendedName>
    <alternativeName>
        <fullName evidence="2">30S ribosomal protein S9</fullName>
    </alternativeName>
</protein>
<organism>
    <name type="scientific">Azotobacter vinelandii (strain DJ / ATCC BAA-1303)</name>
    <dbReference type="NCBI Taxonomy" id="322710"/>
    <lineage>
        <taxon>Bacteria</taxon>
        <taxon>Pseudomonadati</taxon>
        <taxon>Pseudomonadota</taxon>
        <taxon>Gammaproteobacteria</taxon>
        <taxon>Pseudomonadales</taxon>
        <taxon>Pseudomonadaceae</taxon>
        <taxon>Azotobacter</taxon>
    </lineage>
</organism>
<accession>C1DQ79</accession>
<feature type="chain" id="PRO_1000211825" description="Small ribosomal subunit protein uS9">
    <location>
        <begin position="1"/>
        <end position="130"/>
    </location>
</feature>
<keyword id="KW-0687">Ribonucleoprotein</keyword>
<keyword id="KW-0689">Ribosomal protein</keyword>
<gene>
    <name evidence="1" type="primary">rpsI</name>
    <name type="ordered locus">Avin_13050</name>
</gene>
<comment type="similarity">
    <text evidence="1">Belongs to the universal ribosomal protein uS9 family.</text>
</comment>
<sequence>MSATQNYGTGRRKTATARVFLRPGTGKISINNRSLEQFFGRETARMVVRQPLELTETVEKFDIYVTVIGGGVSGQAGAIRHGITRALIEYDETFRSSLRHAGYVTRDAREVERKKVGLRKARKRPQYSKR</sequence>
<proteinExistence type="inferred from homology"/>